<dbReference type="EC" id="6.3.2.4" evidence="2"/>
<dbReference type="EMBL" id="AP008957">
    <property type="protein sequence ID" value="BAH33124.1"/>
    <property type="molecule type" value="Genomic_DNA"/>
</dbReference>
<dbReference type="RefSeq" id="WP_020907268.1">
    <property type="nucleotide sequence ID" value="NC_012490.1"/>
</dbReference>
<dbReference type="SMR" id="C0ZXN9"/>
<dbReference type="KEGG" id="rer:RER_24160"/>
<dbReference type="eggNOG" id="COG1181">
    <property type="taxonomic scope" value="Bacteria"/>
</dbReference>
<dbReference type="HOGENOM" id="CLU_039268_0_1_11"/>
<dbReference type="UniPathway" id="UPA00219"/>
<dbReference type="Proteomes" id="UP000002204">
    <property type="component" value="Chromosome"/>
</dbReference>
<dbReference type="GO" id="GO:0005829">
    <property type="term" value="C:cytosol"/>
    <property type="evidence" value="ECO:0007669"/>
    <property type="project" value="TreeGrafter"/>
</dbReference>
<dbReference type="GO" id="GO:0005524">
    <property type="term" value="F:ATP binding"/>
    <property type="evidence" value="ECO:0007669"/>
    <property type="project" value="UniProtKB-KW"/>
</dbReference>
<dbReference type="GO" id="GO:0008716">
    <property type="term" value="F:D-alanine-D-alanine ligase activity"/>
    <property type="evidence" value="ECO:0007669"/>
    <property type="project" value="UniProtKB-UniRule"/>
</dbReference>
<dbReference type="GO" id="GO:0046872">
    <property type="term" value="F:metal ion binding"/>
    <property type="evidence" value="ECO:0007669"/>
    <property type="project" value="UniProtKB-KW"/>
</dbReference>
<dbReference type="GO" id="GO:0071555">
    <property type="term" value="P:cell wall organization"/>
    <property type="evidence" value="ECO:0007669"/>
    <property type="project" value="UniProtKB-KW"/>
</dbReference>
<dbReference type="GO" id="GO:0009252">
    <property type="term" value="P:peptidoglycan biosynthetic process"/>
    <property type="evidence" value="ECO:0007669"/>
    <property type="project" value="UniProtKB-UniRule"/>
</dbReference>
<dbReference type="GO" id="GO:0008360">
    <property type="term" value="P:regulation of cell shape"/>
    <property type="evidence" value="ECO:0007669"/>
    <property type="project" value="UniProtKB-KW"/>
</dbReference>
<dbReference type="FunFam" id="3.30.470.20:FF:000008">
    <property type="entry name" value="D-alanine--D-alanine ligase"/>
    <property type="match status" value="1"/>
</dbReference>
<dbReference type="Gene3D" id="3.40.50.20">
    <property type="match status" value="1"/>
</dbReference>
<dbReference type="Gene3D" id="3.30.1490.20">
    <property type="entry name" value="ATP-grasp fold, A domain"/>
    <property type="match status" value="1"/>
</dbReference>
<dbReference type="Gene3D" id="3.30.470.20">
    <property type="entry name" value="ATP-grasp fold, B domain"/>
    <property type="match status" value="1"/>
</dbReference>
<dbReference type="HAMAP" id="MF_00047">
    <property type="entry name" value="Dala_Dala_lig"/>
    <property type="match status" value="1"/>
</dbReference>
<dbReference type="InterPro" id="IPR011761">
    <property type="entry name" value="ATP-grasp"/>
</dbReference>
<dbReference type="InterPro" id="IPR013815">
    <property type="entry name" value="ATP_grasp_subdomain_1"/>
</dbReference>
<dbReference type="InterPro" id="IPR000291">
    <property type="entry name" value="D-Ala_lig_Van_CS"/>
</dbReference>
<dbReference type="InterPro" id="IPR005905">
    <property type="entry name" value="D_ala_D_ala"/>
</dbReference>
<dbReference type="InterPro" id="IPR011095">
    <property type="entry name" value="Dala_Dala_lig_C"/>
</dbReference>
<dbReference type="InterPro" id="IPR011127">
    <property type="entry name" value="Dala_Dala_lig_N"/>
</dbReference>
<dbReference type="InterPro" id="IPR016185">
    <property type="entry name" value="PreATP-grasp_dom_sf"/>
</dbReference>
<dbReference type="NCBIfam" id="TIGR01205">
    <property type="entry name" value="D_ala_D_alaTIGR"/>
    <property type="match status" value="1"/>
</dbReference>
<dbReference type="NCBIfam" id="NF002378">
    <property type="entry name" value="PRK01372.1"/>
    <property type="match status" value="1"/>
</dbReference>
<dbReference type="NCBIfam" id="NF002528">
    <property type="entry name" value="PRK01966.1-4"/>
    <property type="match status" value="1"/>
</dbReference>
<dbReference type="PANTHER" id="PTHR23132">
    <property type="entry name" value="D-ALANINE--D-ALANINE LIGASE"/>
    <property type="match status" value="1"/>
</dbReference>
<dbReference type="PANTHER" id="PTHR23132:SF25">
    <property type="entry name" value="D-ALANINE--D-ALANINE LIGASE A"/>
    <property type="match status" value="1"/>
</dbReference>
<dbReference type="Pfam" id="PF07478">
    <property type="entry name" value="Dala_Dala_lig_C"/>
    <property type="match status" value="1"/>
</dbReference>
<dbReference type="Pfam" id="PF01820">
    <property type="entry name" value="Dala_Dala_lig_N"/>
    <property type="match status" value="1"/>
</dbReference>
<dbReference type="PIRSF" id="PIRSF039102">
    <property type="entry name" value="Ddl/VanB"/>
    <property type="match status" value="1"/>
</dbReference>
<dbReference type="SUPFAM" id="SSF56059">
    <property type="entry name" value="Glutathione synthetase ATP-binding domain-like"/>
    <property type="match status" value="1"/>
</dbReference>
<dbReference type="SUPFAM" id="SSF52440">
    <property type="entry name" value="PreATP-grasp domain"/>
    <property type="match status" value="1"/>
</dbReference>
<dbReference type="PROSITE" id="PS50975">
    <property type="entry name" value="ATP_GRASP"/>
    <property type="match status" value="1"/>
</dbReference>
<dbReference type="PROSITE" id="PS00843">
    <property type="entry name" value="DALA_DALA_LIGASE_1"/>
    <property type="match status" value="1"/>
</dbReference>
<dbReference type="PROSITE" id="PS00844">
    <property type="entry name" value="DALA_DALA_LIGASE_2"/>
    <property type="match status" value="1"/>
</dbReference>
<comment type="function">
    <text evidence="2">Cell wall formation.</text>
</comment>
<comment type="catalytic activity">
    <reaction evidence="2">
        <text>2 D-alanine + ATP = D-alanyl-D-alanine + ADP + phosphate + H(+)</text>
        <dbReference type="Rhea" id="RHEA:11224"/>
        <dbReference type="ChEBI" id="CHEBI:15378"/>
        <dbReference type="ChEBI" id="CHEBI:30616"/>
        <dbReference type="ChEBI" id="CHEBI:43474"/>
        <dbReference type="ChEBI" id="CHEBI:57416"/>
        <dbReference type="ChEBI" id="CHEBI:57822"/>
        <dbReference type="ChEBI" id="CHEBI:456216"/>
        <dbReference type="EC" id="6.3.2.4"/>
    </reaction>
</comment>
<comment type="cofactor">
    <cofactor evidence="1">
        <name>Mg(2+)</name>
        <dbReference type="ChEBI" id="CHEBI:18420"/>
    </cofactor>
    <cofactor evidence="1">
        <name>Mn(2+)</name>
        <dbReference type="ChEBI" id="CHEBI:29035"/>
    </cofactor>
    <text evidence="1">Binds 2 magnesium or manganese ions per subunit.</text>
</comment>
<comment type="pathway">
    <text evidence="2">Cell wall biogenesis; peptidoglycan biosynthesis.</text>
</comment>
<comment type="subcellular location">
    <subcellularLocation>
        <location evidence="2">Cytoplasm</location>
    </subcellularLocation>
</comment>
<comment type="similarity">
    <text evidence="2">Belongs to the D-alanine--D-alanine ligase family.</text>
</comment>
<accession>C0ZXN9</accession>
<organism>
    <name type="scientific">Rhodococcus erythropolis (strain PR4 / NBRC 100887)</name>
    <dbReference type="NCBI Taxonomy" id="234621"/>
    <lineage>
        <taxon>Bacteria</taxon>
        <taxon>Bacillati</taxon>
        <taxon>Actinomycetota</taxon>
        <taxon>Actinomycetes</taxon>
        <taxon>Mycobacteriales</taxon>
        <taxon>Nocardiaceae</taxon>
        <taxon>Rhodococcus</taxon>
        <taxon>Rhodococcus erythropolis group</taxon>
    </lineage>
</organism>
<sequence>MNSSRTRVAVIFGGRSNEHSVSCVSAGSVLSNLDPDRYDVVPIGITVDGSWVLGSSDPSSLAISGRALPSVDKDGTSVVLSADPTREGEVISFDGSDAGAVLASVDVVFPVLHGAYGEDGTIQGLLELAGVPYVGPGVLASAAGMDKEFTKKLLAAEGLPVGVQVVLRPGIATLTEEQKAELGLPVFVKPARGGSSIGITRVSNWDGLDGAIAHARLHDPKVIVEGAIIGREVECGVLEFPNGDVKASVVAEIRMPDADTDSDAFYDFDTKYLDDVCEFDIPAKLDESVSDQIRELAVRAFKALDCQGLSRVDFFVTADGPVINEINTMPGFTSISMYPKMWNATGIDYRTLISTLVDTAIARGTGLR</sequence>
<keyword id="KW-0067">ATP-binding</keyword>
<keyword id="KW-0133">Cell shape</keyword>
<keyword id="KW-0961">Cell wall biogenesis/degradation</keyword>
<keyword id="KW-0963">Cytoplasm</keyword>
<keyword id="KW-0436">Ligase</keyword>
<keyword id="KW-0460">Magnesium</keyword>
<keyword id="KW-0464">Manganese</keyword>
<keyword id="KW-0479">Metal-binding</keyword>
<keyword id="KW-0547">Nucleotide-binding</keyword>
<keyword id="KW-0573">Peptidoglycan synthesis</keyword>
<evidence type="ECO:0000250" key="1"/>
<evidence type="ECO:0000255" key="2">
    <source>
        <dbReference type="HAMAP-Rule" id="MF_00047"/>
    </source>
</evidence>
<protein>
    <recommendedName>
        <fullName evidence="2">D-alanine--D-alanine ligase</fullName>
        <ecNumber evidence="2">6.3.2.4</ecNumber>
    </recommendedName>
    <alternativeName>
        <fullName evidence="2">D-Ala-D-Ala ligase</fullName>
    </alternativeName>
    <alternativeName>
        <fullName evidence="2">D-alanylalanine synthetase</fullName>
    </alternativeName>
</protein>
<feature type="chain" id="PRO_1000202203" description="D-alanine--D-alanine ligase">
    <location>
        <begin position="1"/>
        <end position="368"/>
    </location>
</feature>
<feature type="domain" description="ATP-grasp" evidence="2">
    <location>
        <begin position="151"/>
        <end position="358"/>
    </location>
</feature>
<feature type="binding site" evidence="2">
    <location>
        <begin position="179"/>
        <end position="234"/>
    </location>
    <ligand>
        <name>ATP</name>
        <dbReference type="ChEBI" id="CHEBI:30616"/>
    </ligand>
</feature>
<feature type="binding site" evidence="2">
    <location>
        <position position="313"/>
    </location>
    <ligand>
        <name>Mg(2+)</name>
        <dbReference type="ChEBI" id="CHEBI:18420"/>
        <label>1</label>
    </ligand>
</feature>
<feature type="binding site" evidence="2">
    <location>
        <position position="325"/>
    </location>
    <ligand>
        <name>Mg(2+)</name>
        <dbReference type="ChEBI" id="CHEBI:18420"/>
        <label>1</label>
    </ligand>
</feature>
<feature type="binding site" evidence="2">
    <location>
        <position position="325"/>
    </location>
    <ligand>
        <name>Mg(2+)</name>
        <dbReference type="ChEBI" id="CHEBI:18420"/>
        <label>2</label>
    </ligand>
</feature>
<feature type="binding site" evidence="2">
    <location>
        <position position="327"/>
    </location>
    <ligand>
        <name>Mg(2+)</name>
        <dbReference type="ChEBI" id="CHEBI:18420"/>
        <label>2</label>
    </ligand>
</feature>
<proteinExistence type="inferred from homology"/>
<gene>
    <name evidence="2" type="primary">ddl</name>
    <name type="ordered locus">RER_24160</name>
</gene>
<name>DDL_RHOE4</name>
<reference key="1">
    <citation type="submission" date="2005-03" db="EMBL/GenBank/DDBJ databases">
        <title>Comparison of the complete genome sequences of Rhodococcus erythropolis PR4 and Rhodococcus opacus B4.</title>
        <authorList>
            <person name="Takarada H."/>
            <person name="Sekine M."/>
            <person name="Hosoyama A."/>
            <person name="Yamada R."/>
            <person name="Fujisawa T."/>
            <person name="Omata S."/>
            <person name="Shimizu A."/>
            <person name="Tsukatani N."/>
            <person name="Tanikawa S."/>
            <person name="Fujita N."/>
            <person name="Harayama S."/>
        </authorList>
    </citation>
    <scope>NUCLEOTIDE SEQUENCE [LARGE SCALE GENOMIC DNA]</scope>
    <source>
        <strain>PR4 / NBRC 100887</strain>
    </source>
</reference>